<reference key="1">
    <citation type="journal article" date="1991" name="Mol. Microbiol.">
        <title>Characterization of two insertion sequences, IS701 and IS702, from the cyanobacterium Calothrix species PCC 7601.</title>
        <authorList>
            <person name="Mazel D."/>
            <person name="Bernard C."/>
            <person name="Schwartz R."/>
            <person name="Castets A.M."/>
            <person name="Houmard J."/>
            <person name="Tandeau de Marsac N."/>
        </authorList>
    </citation>
    <scope>NUCLEOTIDE SEQUENCE [GENOMIC DNA]</scope>
</reference>
<dbReference type="EMBL" id="X60383">
    <property type="protein sequence ID" value="CAA42934.1"/>
    <property type="molecule type" value="Genomic_DNA"/>
</dbReference>
<dbReference type="SMR" id="Q00461"/>
<dbReference type="GO" id="GO:0003677">
    <property type="term" value="F:DNA binding"/>
    <property type="evidence" value="ECO:0007669"/>
    <property type="project" value="UniProtKB-KW"/>
</dbReference>
<dbReference type="GO" id="GO:0006310">
    <property type="term" value="P:DNA recombination"/>
    <property type="evidence" value="ECO:0007669"/>
    <property type="project" value="UniProtKB-KW"/>
</dbReference>
<dbReference type="GO" id="GO:0032196">
    <property type="term" value="P:transposition"/>
    <property type="evidence" value="ECO:0007669"/>
    <property type="project" value="UniProtKB-KW"/>
</dbReference>
<dbReference type="InterPro" id="IPR039365">
    <property type="entry name" value="IS701-like"/>
</dbReference>
<dbReference type="InterPro" id="IPR038721">
    <property type="entry name" value="IS701-like_DDE_dom"/>
</dbReference>
<dbReference type="InterPro" id="IPR012337">
    <property type="entry name" value="RNaseH-like_sf"/>
</dbReference>
<dbReference type="NCBIfam" id="NF033540">
    <property type="entry name" value="transpos_IS701"/>
    <property type="match status" value="1"/>
</dbReference>
<dbReference type="PANTHER" id="PTHR33627">
    <property type="entry name" value="TRANSPOSASE"/>
    <property type="match status" value="1"/>
</dbReference>
<dbReference type="PANTHER" id="PTHR33627:SF1">
    <property type="entry name" value="TRANSPOSASE"/>
    <property type="match status" value="1"/>
</dbReference>
<dbReference type="Pfam" id="PF13546">
    <property type="entry name" value="DDE_5"/>
    <property type="match status" value="1"/>
</dbReference>
<dbReference type="SUPFAM" id="SSF53098">
    <property type="entry name" value="Ribonuclease H-like"/>
    <property type="match status" value="1"/>
</dbReference>
<comment type="function">
    <text>Involved in the transposition of the insertion sequence.</text>
</comment>
<protein>
    <recommendedName>
        <fullName>Probable transposase for insertion sequence element IS701</fullName>
    </recommendedName>
</protein>
<sequence length="380" mass="44230">MVQPRPAAPTVKFVDEYCQWYKSLFPDVRSFEAFKYLHVGCISDLKRKTLPEIAKIVGLDNQQGLHHFLTTSPWDIEKLRTLRLELILQVLKGRPIILIIDETGDKKKGSKTDYVKRQYIGNLGKTDNGIVAVTVYGVFCGMTFPLLFEVYKPRERLQAGDKYRTKPEIAAILIKKLQSMGFKFNLVLADSLYGESGKNFISVLDELNLNYIVAIRSNHYVEILPRQHIQYLKWQKFQRVFSDLSRENRFIREIIPGKRGELRYWQITTDPENLPDNTTWYVMSKYPDITPREVGNFYGLRTWVEYGLKQSKNELGWSDFRLTHYPDIEAMVGNYLQCLFNGVCIRSNCFSLHHNESQNLFHILGGIMEMAGRTFLTIFV</sequence>
<proteinExistence type="predicted"/>
<name>T701_MICDP</name>
<organism>
    <name type="scientific">Microchaete diplosiphon</name>
    <name type="common">Fremyella diplosiphon</name>
    <dbReference type="NCBI Taxonomy" id="1197"/>
    <lineage>
        <taxon>Bacteria</taxon>
        <taxon>Bacillati</taxon>
        <taxon>Cyanobacteriota</taxon>
        <taxon>Cyanophyceae</taxon>
        <taxon>Nostocales</taxon>
        <taxon>Rivulariaceae</taxon>
        <taxon>Microchaete</taxon>
    </lineage>
</organism>
<feature type="chain" id="PRO_0000075447" description="Probable transposase for insertion sequence element IS701">
    <location>
        <begin position="1"/>
        <end position="380"/>
    </location>
</feature>
<accession>Q00461</accession>
<keyword id="KW-0233">DNA recombination</keyword>
<keyword id="KW-0238">DNA-binding</keyword>
<keyword id="KW-0814">Transposable element</keyword>
<keyword id="KW-0815">Transposition</keyword>